<comment type="similarity">
    <text evidence="1">Belongs to the UPF0337 (CsbD) family.</text>
</comment>
<feature type="chain" id="PRO_0000209979" description="UPF0337 protein asr4653">
    <location>
        <begin position="1"/>
        <end position="60"/>
    </location>
</feature>
<name>Y4653_NOSS1</name>
<organism>
    <name type="scientific">Nostoc sp. (strain PCC 7120 / SAG 25.82 / UTEX 2576)</name>
    <dbReference type="NCBI Taxonomy" id="103690"/>
    <lineage>
        <taxon>Bacteria</taxon>
        <taxon>Bacillati</taxon>
        <taxon>Cyanobacteriota</taxon>
        <taxon>Cyanophyceae</taxon>
        <taxon>Nostocales</taxon>
        <taxon>Nostocaceae</taxon>
        <taxon>Nostoc</taxon>
    </lineage>
</organism>
<accession>Q8YNB4</accession>
<evidence type="ECO:0000305" key="1"/>
<gene>
    <name type="ordered locus">asr4653</name>
</gene>
<keyword id="KW-1185">Reference proteome</keyword>
<protein>
    <recommendedName>
        <fullName>UPF0337 protein asr4653</fullName>
    </recommendedName>
</protein>
<dbReference type="EMBL" id="BA000019">
    <property type="protein sequence ID" value="BAB76352.1"/>
    <property type="molecule type" value="Genomic_DNA"/>
</dbReference>
<dbReference type="PIR" id="AE2387">
    <property type="entry name" value="AE2387"/>
</dbReference>
<dbReference type="RefSeq" id="WP_010998784.1">
    <property type="nucleotide sequence ID" value="NZ_RSCN01000020.1"/>
</dbReference>
<dbReference type="SMR" id="Q8YNB4"/>
<dbReference type="STRING" id="103690.gene:10496705"/>
<dbReference type="KEGG" id="ana:asr4653"/>
<dbReference type="eggNOG" id="COG3237">
    <property type="taxonomic scope" value="Bacteria"/>
</dbReference>
<dbReference type="OrthoDB" id="465089at2"/>
<dbReference type="Proteomes" id="UP000002483">
    <property type="component" value="Chromosome"/>
</dbReference>
<dbReference type="Gene3D" id="1.10.1470.10">
    <property type="entry name" value="YjbJ"/>
    <property type="match status" value="1"/>
</dbReference>
<dbReference type="InterPro" id="IPR008462">
    <property type="entry name" value="CsbD"/>
</dbReference>
<dbReference type="InterPro" id="IPR036629">
    <property type="entry name" value="YjbJ_sf"/>
</dbReference>
<dbReference type="Pfam" id="PF05532">
    <property type="entry name" value="CsbD"/>
    <property type="match status" value="1"/>
</dbReference>
<dbReference type="SUPFAM" id="SSF69047">
    <property type="entry name" value="Hypothetical protein YjbJ"/>
    <property type="match status" value="1"/>
</dbReference>
<proteinExistence type="inferred from homology"/>
<reference key="1">
    <citation type="journal article" date="2001" name="DNA Res.">
        <title>Complete genomic sequence of the filamentous nitrogen-fixing cyanobacterium Anabaena sp. strain PCC 7120.</title>
        <authorList>
            <person name="Kaneko T."/>
            <person name="Nakamura Y."/>
            <person name="Wolk C.P."/>
            <person name="Kuritz T."/>
            <person name="Sasamoto S."/>
            <person name="Watanabe A."/>
            <person name="Iriguchi M."/>
            <person name="Ishikawa A."/>
            <person name="Kawashima K."/>
            <person name="Kimura T."/>
            <person name="Kishida Y."/>
            <person name="Kohara M."/>
            <person name="Matsumoto M."/>
            <person name="Matsuno A."/>
            <person name="Muraki A."/>
            <person name="Nakazaki N."/>
            <person name="Shimpo S."/>
            <person name="Sugimoto M."/>
            <person name="Takazawa M."/>
            <person name="Yamada M."/>
            <person name="Yasuda M."/>
            <person name="Tabata S."/>
        </authorList>
    </citation>
    <scope>NUCLEOTIDE SEQUENCE [LARGE SCALE GENOMIC DNA]</scope>
    <source>
        <strain>PCC 7120 / SAG 25.82 / UTEX 2576</strain>
    </source>
</reference>
<sequence>MSTEKRIEATAKNIEGKLQEVIGEVTGNPSDKAEGKAKQAESQVIHTTENIKDELKKAID</sequence>